<organism>
    <name type="scientific">Bordetella petrii (strain ATCC BAA-461 / DSM 12804 / CCUG 43448)</name>
    <dbReference type="NCBI Taxonomy" id="340100"/>
    <lineage>
        <taxon>Bacteria</taxon>
        <taxon>Pseudomonadati</taxon>
        <taxon>Pseudomonadota</taxon>
        <taxon>Betaproteobacteria</taxon>
        <taxon>Burkholderiales</taxon>
        <taxon>Alcaligenaceae</taxon>
        <taxon>Bordetella</taxon>
    </lineage>
</organism>
<reference key="1">
    <citation type="journal article" date="2008" name="BMC Genomics">
        <title>The missing link: Bordetella petrii is endowed with both the metabolic versatility of environmental bacteria and virulence traits of pathogenic Bordetellae.</title>
        <authorList>
            <person name="Gross R."/>
            <person name="Guzman C.A."/>
            <person name="Sebaihia M."/>
            <person name="Martin dos Santos V.A.P."/>
            <person name="Pieper D.H."/>
            <person name="Koebnik R."/>
            <person name="Lechner M."/>
            <person name="Bartels D."/>
            <person name="Buhrmester J."/>
            <person name="Choudhuri J.V."/>
            <person name="Ebensen T."/>
            <person name="Gaigalat L."/>
            <person name="Herrmann S."/>
            <person name="Khachane A.N."/>
            <person name="Larisch C."/>
            <person name="Link S."/>
            <person name="Linke B."/>
            <person name="Meyer F."/>
            <person name="Mormann S."/>
            <person name="Nakunst D."/>
            <person name="Rueckert C."/>
            <person name="Schneiker-Bekel S."/>
            <person name="Schulze K."/>
            <person name="Voerholter F.-J."/>
            <person name="Yevsa T."/>
            <person name="Engle J.T."/>
            <person name="Goldman W.E."/>
            <person name="Puehler A."/>
            <person name="Goebel U.B."/>
            <person name="Goesmann A."/>
            <person name="Bloecker H."/>
            <person name="Kaiser O."/>
            <person name="Martinez-Arias R."/>
        </authorList>
    </citation>
    <scope>NUCLEOTIDE SEQUENCE [LARGE SCALE GENOMIC DNA]</scope>
    <source>
        <strain>ATCC BAA-461 / DSM 12804 / CCUG 43448</strain>
    </source>
</reference>
<name>RS3_BORPD</name>
<keyword id="KW-0687">Ribonucleoprotein</keyword>
<keyword id="KW-0689">Ribosomal protein</keyword>
<keyword id="KW-0694">RNA-binding</keyword>
<keyword id="KW-0699">rRNA-binding</keyword>
<dbReference type="EMBL" id="AM902716">
    <property type="protein sequence ID" value="CAP45298.1"/>
    <property type="molecule type" value="Genomic_DNA"/>
</dbReference>
<dbReference type="SMR" id="A9IIZ1"/>
<dbReference type="STRING" id="94624.Bpet4946"/>
<dbReference type="KEGG" id="bpt:Bpet4946"/>
<dbReference type="eggNOG" id="COG0092">
    <property type="taxonomic scope" value="Bacteria"/>
</dbReference>
<dbReference type="Proteomes" id="UP000001225">
    <property type="component" value="Chromosome"/>
</dbReference>
<dbReference type="GO" id="GO:0022627">
    <property type="term" value="C:cytosolic small ribosomal subunit"/>
    <property type="evidence" value="ECO:0007669"/>
    <property type="project" value="TreeGrafter"/>
</dbReference>
<dbReference type="GO" id="GO:0003729">
    <property type="term" value="F:mRNA binding"/>
    <property type="evidence" value="ECO:0007669"/>
    <property type="project" value="UniProtKB-UniRule"/>
</dbReference>
<dbReference type="GO" id="GO:0019843">
    <property type="term" value="F:rRNA binding"/>
    <property type="evidence" value="ECO:0007669"/>
    <property type="project" value="UniProtKB-UniRule"/>
</dbReference>
<dbReference type="GO" id="GO:0003735">
    <property type="term" value="F:structural constituent of ribosome"/>
    <property type="evidence" value="ECO:0007669"/>
    <property type="project" value="InterPro"/>
</dbReference>
<dbReference type="GO" id="GO:0006412">
    <property type="term" value="P:translation"/>
    <property type="evidence" value="ECO:0007669"/>
    <property type="project" value="UniProtKB-UniRule"/>
</dbReference>
<dbReference type="CDD" id="cd02412">
    <property type="entry name" value="KH-II_30S_S3"/>
    <property type="match status" value="1"/>
</dbReference>
<dbReference type="FunFam" id="3.30.1140.32:FF:000006">
    <property type="entry name" value="30S ribosomal protein S3"/>
    <property type="match status" value="1"/>
</dbReference>
<dbReference type="FunFam" id="3.30.300.20:FF:000001">
    <property type="entry name" value="30S ribosomal protein S3"/>
    <property type="match status" value="1"/>
</dbReference>
<dbReference type="Gene3D" id="3.30.300.20">
    <property type="match status" value="1"/>
</dbReference>
<dbReference type="Gene3D" id="3.30.1140.32">
    <property type="entry name" value="Ribosomal protein S3, C-terminal domain"/>
    <property type="match status" value="1"/>
</dbReference>
<dbReference type="HAMAP" id="MF_01309_B">
    <property type="entry name" value="Ribosomal_uS3_B"/>
    <property type="match status" value="1"/>
</dbReference>
<dbReference type="InterPro" id="IPR004087">
    <property type="entry name" value="KH_dom"/>
</dbReference>
<dbReference type="InterPro" id="IPR015946">
    <property type="entry name" value="KH_dom-like_a/b"/>
</dbReference>
<dbReference type="InterPro" id="IPR004044">
    <property type="entry name" value="KH_dom_type_2"/>
</dbReference>
<dbReference type="InterPro" id="IPR009019">
    <property type="entry name" value="KH_sf_prok-type"/>
</dbReference>
<dbReference type="InterPro" id="IPR036419">
    <property type="entry name" value="Ribosomal_S3_C_sf"/>
</dbReference>
<dbReference type="InterPro" id="IPR005704">
    <property type="entry name" value="Ribosomal_uS3_bac-typ"/>
</dbReference>
<dbReference type="InterPro" id="IPR001351">
    <property type="entry name" value="Ribosomal_uS3_C"/>
</dbReference>
<dbReference type="InterPro" id="IPR018280">
    <property type="entry name" value="Ribosomal_uS3_CS"/>
</dbReference>
<dbReference type="NCBIfam" id="TIGR01009">
    <property type="entry name" value="rpsC_bact"/>
    <property type="match status" value="1"/>
</dbReference>
<dbReference type="PANTHER" id="PTHR11760">
    <property type="entry name" value="30S/40S RIBOSOMAL PROTEIN S3"/>
    <property type="match status" value="1"/>
</dbReference>
<dbReference type="PANTHER" id="PTHR11760:SF19">
    <property type="entry name" value="SMALL RIBOSOMAL SUBUNIT PROTEIN US3C"/>
    <property type="match status" value="1"/>
</dbReference>
<dbReference type="Pfam" id="PF07650">
    <property type="entry name" value="KH_2"/>
    <property type="match status" value="1"/>
</dbReference>
<dbReference type="Pfam" id="PF00189">
    <property type="entry name" value="Ribosomal_S3_C"/>
    <property type="match status" value="1"/>
</dbReference>
<dbReference type="SMART" id="SM00322">
    <property type="entry name" value="KH"/>
    <property type="match status" value="1"/>
</dbReference>
<dbReference type="SUPFAM" id="SSF54814">
    <property type="entry name" value="Prokaryotic type KH domain (KH-domain type II)"/>
    <property type="match status" value="1"/>
</dbReference>
<dbReference type="SUPFAM" id="SSF54821">
    <property type="entry name" value="Ribosomal protein S3 C-terminal domain"/>
    <property type="match status" value="1"/>
</dbReference>
<dbReference type="PROSITE" id="PS50823">
    <property type="entry name" value="KH_TYPE_2"/>
    <property type="match status" value="1"/>
</dbReference>
<dbReference type="PROSITE" id="PS00548">
    <property type="entry name" value="RIBOSOMAL_S3"/>
    <property type="match status" value="1"/>
</dbReference>
<accession>A9IIZ1</accession>
<proteinExistence type="inferred from homology"/>
<protein>
    <recommendedName>
        <fullName evidence="1">Small ribosomal subunit protein uS3</fullName>
    </recommendedName>
    <alternativeName>
        <fullName evidence="3">30S ribosomal protein S3</fullName>
    </alternativeName>
</protein>
<evidence type="ECO:0000255" key="1">
    <source>
        <dbReference type="HAMAP-Rule" id="MF_01309"/>
    </source>
</evidence>
<evidence type="ECO:0000256" key="2">
    <source>
        <dbReference type="SAM" id="MobiDB-lite"/>
    </source>
</evidence>
<evidence type="ECO:0000305" key="3"/>
<feature type="chain" id="PRO_1000140927" description="Small ribosomal subunit protein uS3">
    <location>
        <begin position="1"/>
        <end position="263"/>
    </location>
</feature>
<feature type="domain" description="KH type-2" evidence="1">
    <location>
        <begin position="39"/>
        <end position="107"/>
    </location>
</feature>
<feature type="region of interest" description="Disordered" evidence="2">
    <location>
        <begin position="211"/>
        <end position="263"/>
    </location>
</feature>
<feature type="compositionally biased region" description="Basic and acidic residues" evidence="2">
    <location>
        <begin position="219"/>
        <end position="240"/>
    </location>
</feature>
<gene>
    <name evidence="1" type="primary">rpsC</name>
    <name type="ordered locus">Bpet4946</name>
</gene>
<sequence>MGQKIHPTGFRLAVTRNWSSRWFADDKAFGSMLAEDIRVREYLKKKLKSASVGRVIIERPAKNARITVYSARPGVVIGKRGEDIESLKADLQRLMGVPVHVNIEEIRKPETDAQLIADSISQQLEKRIMFRRAMKRAMQNAMRLGAQGIKIMSSGRLNGIEIARTEWYREGRVPLHTLKANIDYGTSEAHTTYGVIGIKVWVYKGDMLANGELPPEAATPREEERRPRRAPRGDRPDGGRPGRPGGRGRGPRKADAAPAPEGE</sequence>
<comment type="function">
    <text evidence="1">Binds the lower part of the 30S subunit head. Binds mRNA in the 70S ribosome, positioning it for translation.</text>
</comment>
<comment type="subunit">
    <text evidence="1">Part of the 30S ribosomal subunit. Forms a tight complex with proteins S10 and S14.</text>
</comment>
<comment type="similarity">
    <text evidence="1">Belongs to the universal ribosomal protein uS3 family.</text>
</comment>